<protein>
    <recommendedName>
        <fullName evidence="1">Adenine phosphoribosyltransferase</fullName>
        <shortName evidence="1">APRT</shortName>
        <ecNumber evidence="1">2.4.2.7</ecNumber>
    </recommendedName>
</protein>
<comment type="function">
    <text evidence="1">Catalyzes a salvage reaction resulting in the formation of AMP, that is energically less costly than de novo synthesis.</text>
</comment>
<comment type="catalytic activity">
    <reaction evidence="1">
        <text>AMP + diphosphate = 5-phospho-alpha-D-ribose 1-diphosphate + adenine</text>
        <dbReference type="Rhea" id="RHEA:16609"/>
        <dbReference type="ChEBI" id="CHEBI:16708"/>
        <dbReference type="ChEBI" id="CHEBI:33019"/>
        <dbReference type="ChEBI" id="CHEBI:58017"/>
        <dbReference type="ChEBI" id="CHEBI:456215"/>
        <dbReference type="EC" id="2.4.2.7"/>
    </reaction>
</comment>
<comment type="pathway">
    <text evidence="1">Purine metabolism; AMP biosynthesis via salvage pathway; AMP from adenine: step 1/1.</text>
</comment>
<comment type="subunit">
    <text evidence="1">Homodimer.</text>
</comment>
<comment type="subcellular location">
    <subcellularLocation>
        <location evidence="1">Cytoplasm</location>
    </subcellularLocation>
</comment>
<comment type="similarity">
    <text evidence="1">Belongs to the purine/pyrimidine phosphoribosyltransferase family.</text>
</comment>
<sequence length="177" mass="19296">MSIVKSKIRTIPDYPKPGILFRDITSLLIDPEGFQLTIGMFVERYQNAKLNKIAAIDARGFIPGAALAFQLGVGFVPIRKKGKLPGNTISESYALEYGVDHVEIHTDAIVPGDKVLIMDDLIATGGTLEASIKLIQNLKGQIHECSTIINLPDLGGAKRIKDTYGIDVFSICEFEGH</sequence>
<proteinExistence type="inferred from homology"/>
<evidence type="ECO:0000255" key="1">
    <source>
        <dbReference type="HAMAP-Rule" id="MF_00004"/>
    </source>
</evidence>
<keyword id="KW-0963">Cytoplasm</keyword>
<keyword id="KW-0328">Glycosyltransferase</keyword>
<keyword id="KW-0660">Purine salvage</keyword>
<keyword id="KW-0808">Transferase</keyword>
<name>APT_LEPBA</name>
<organism>
    <name type="scientific">Leptospira biflexa serovar Patoc (strain Patoc 1 / Ames)</name>
    <dbReference type="NCBI Taxonomy" id="355278"/>
    <lineage>
        <taxon>Bacteria</taxon>
        <taxon>Pseudomonadati</taxon>
        <taxon>Spirochaetota</taxon>
        <taxon>Spirochaetia</taxon>
        <taxon>Leptospirales</taxon>
        <taxon>Leptospiraceae</taxon>
        <taxon>Leptospira</taxon>
    </lineage>
</organism>
<accession>B0SIB4</accession>
<reference key="1">
    <citation type="journal article" date="2008" name="PLoS ONE">
        <title>Genome sequence of the saprophyte Leptospira biflexa provides insights into the evolution of Leptospira and the pathogenesis of leptospirosis.</title>
        <authorList>
            <person name="Picardeau M."/>
            <person name="Bulach D.M."/>
            <person name="Bouchier C."/>
            <person name="Zuerner R.L."/>
            <person name="Zidane N."/>
            <person name="Wilson P.J."/>
            <person name="Creno S."/>
            <person name="Kuczek E.S."/>
            <person name="Bommezzadri S."/>
            <person name="Davis J.C."/>
            <person name="McGrath A."/>
            <person name="Johnson M.J."/>
            <person name="Boursaux-Eude C."/>
            <person name="Seemann T."/>
            <person name="Rouy Z."/>
            <person name="Coppel R.L."/>
            <person name="Rood J.I."/>
            <person name="Lajus A."/>
            <person name="Davies J.K."/>
            <person name="Medigue C."/>
            <person name="Adler B."/>
        </authorList>
    </citation>
    <scope>NUCLEOTIDE SEQUENCE [LARGE SCALE GENOMIC DNA]</scope>
    <source>
        <strain>Patoc 1 / Ames</strain>
    </source>
</reference>
<dbReference type="EC" id="2.4.2.7" evidence="1"/>
<dbReference type="EMBL" id="CP000778">
    <property type="protein sequence ID" value="ABZ95948.1"/>
    <property type="molecule type" value="Genomic_DNA"/>
</dbReference>
<dbReference type="RefSeq" id="WP_012476835.1">
    <property type="nucleotide sequence ID" value="NC_010845.1"/>
</dbReference>
<dbReference type="SMR" id="B0SIB4"/>
<dbReference type="KEGG" id="lbf:LBF_4124"/>
<dbReference type="HOGENOM" id="CLU_063339_3_0_12"/>
<dbReference type="UniPathway" id="UPA00588">
    <property type="reaction ID" value="UER00646"/>
</dbReference>
<dbReference type="GO" id="GO:0005737">
    <property type="term" value="C:cytoplasm"/>
    <property type="evidence" value="ECO:0007669"/>
    <property type="project" value="UniProtKB-SubCell"/>
</dbReference>
<dbReference type="GO" id="GO:0003999">
    <property type="term" value="F:adenine phosphoribosyltransferase activity"/>
    <property type="evidence" value="ECO:0007669"/>
    <property type="project" value="UniProtKB-UniRule"/>
</dbReference>
<dbReference type="GO" id="GO:0006168">
    <property type="term" value="P:adenine salvage"/>
    <property type="evidence" value="ECO:0007669"/>
    <property type="project" value="InterPro"/>
</dbReference>
<dbReference type="GO" id="GO:0044209">
    <property type="term" value="P:AMP salvage"/>
    <property type="evidence" value="ECO:0007669"/>
    <property type="project" value="UniProtKB-UniRule"/>
</dbReference>
<dbReference type="GO" id="GO:0006166">
    <property type="term" value="P:purine ribonucleoside salvage"/>
    <property type="evidence" value="ECO:0007669"/>
    <property type="project" value="UniProtKB-KW"/>
</dbReference>
<dbReference type="CDD" id="cd06223">
    <property type="entry name" value="PRTases_typeI"/>
    <property type="match status" value="1"/>
</dbReference>
<dbReference type="FunFam" id="3.40.50.2020:FF:000004">
    <property type="entry name" value="Adenine phosphoribosyltransferase"/>
    <property type="match status" value="1"/>
</dbReference>
<dbReference type="Gene3D" id="3.40.50.2020">
    <property type="match status" value="1"/>
</dbReference>
<dbReference type="HAMAP" id="MF_00004">
    <property type="entry name" value="Aden_phosphoribosyltr"/>
    <property type="match status" value="1"/>
</dbReference>
<dbReference type="InterPro" id="IPR005764">
    <property type="entry name" value="Ade_phspho_trans"/>
</dbReference>
<dbReference type="InterPro" id="IPR050120">
    <property type="entry name" value="Adenine_PRTase"/>
</dbReference>
<dbReference type="InterPro" id="IPR000836">
    <property type="entry name" value="PRibTrfase_dom"/>
</dbReference>
<dbReference type="InterPro" id="IPR029057">
    <property type="entry name" value="PRTase-like"/>
</dbReference>
<dbReference type="NCBIfam" id="TIGR01090">
    <property type="entry name" value="apt"/>
    <property type="match status" value="1"/>
</dbReference>
<dbReference type="NCBIfam" id="NF002632">
    <property type="entry name" value="PRK02304.1-1"/>
    <property type="match status" value="1"/>
</dbReference>
<dbReference type="NCBIfam" id="NF002634">
    <property type="entry name" value="PRK02304.1-3"/>
    <property type="match status" value="1"/>
</dbReference>
<dbReference type="NCBIfam" id="NF002636">
    <property type="entry name" value="PRK02304.1-5"/>
    <property type="match status" value="1"/>
</dbReference>
<dbReference type="PANTHER" id="PTHR11776">
    <property type="entry name" value="ADENINE PHOSPHORIBOSYLTRANSFERASE"/>
    <property type="match status" value="1"/>
</dbReference>
<dbReference type="PANTHER" id="PTHR11776:SF7">
    <property type="entry name" value="PHOSPHORIBOSYLTRANSFERASE DOMAIN-CONTAINING PROTEIN"/>
    <property type="match status" value="1"/>
</dbReference>
<dbReference type="Pfam" id="PF00156">
    <property type="entry name" value="Pribosyltran"/>
    <property type="match status" value="1"/>
</dbReference>
<dbReference type="SUPFAM" id="SSF53271">
    <property type="entry name" value="PRTase-like"/>
    <property type="match status" value="1"/>
</dbReference>
<dbReference type="PROSITE" id="PS00103">
    <property type="entry name" value="PUR_PYR_PR_TRANSFER"/>
    <property type="match status" value="1"/>
</dbReference>
<gene>
    <name evidence="1" type="primary">apt</name>
    <name type="ordered locus">LBF_4124</name>
</gene>
<feature type="chain" id="PRO_1000088982" description="Adenine phosphoribosyltransferase">
    <location>
        <begin position="1"/>
        <end position="177"/>
    </location>
</feature>